<organism>
    <name type="scientific">Burkholderia pseudomallei (strain K96243)</name>
    <dbReference type="NCBI Taxonomy" id="272560"/>
    <lineage>
        <taxon>Bacteria</taxon>
        <taxon>Pseudomonadati</taxon>
        <taxon>Pseudomonadota</taxon>
        <taxon>Betaproteobacteria</taxon>
        <taxon>Burkholderiales</taxon>
        <taxon>Burkholderiaceae</taxon>
        <taxon>Burkholderia</taxon>
        <taxon>pseudomallei group</taxon>
    </lineage>
</organism>
<gene>
    <name evidence="1" type="primary">cheB2</name>
    <name type="ordered locus">BPSS1870</name>
</gene>
<protein>
    <recommendedName>
        <fullName evidence="1">Protein-glutamate methylesterase/protein-glutamine glutaminase 2</fullName>
        <ecNumber evidence="1">3.1.1.61</ecNumber>
        <ecNumber evidence="1">3.5.1.44</ecNumber>
    </recommendedName>
</protein>
<reference key="1">
    <citation type="journal article" date="2004" name="Proc. Natl. Acad. Sci. U.S.A.">
        <title>Genomic plasticity of the causative agent of melioidosis, Burkholderia pseudomallei.</title>
        <authorList>
            <person name="Holden M.T.G."/>
            <person name="Titball R.W."/>
            <person name="Peacock S.J."/>
            <person name="Cerdeno-Tarraga A.-M."/>
            <person name="Atkins T."/>
            <person name="Crossman L.C."/>
            <person name="Pitt T."/>
            <person name="Churcher C."/>
            <person name="Mungall K.L."/>
            <person name="Bentley S.D."/>
            <person name="Sebaihia M."/>
            <person name="Thomson N.R."/>
            <person name="Bason N."/>
            <person name="Beacham I.R."/>
            <person name="Brooks K."/>
            <person name="Brown K.A."/>
            <person name="Brown N.F."/>
            <person name="Challis G.L."/>
            <person name="Cherevach I."/>
            <person name="Chillingworth T."/>
            <person name="Cronin A."/>
            <person name="Crossett B."/>
            <person name="Davis P."/>
            <person name="DeShazer D."/>
            <person name="Feltwell T."/>
            <person name="Fraser A."/>
            <person name="Hance Z."/>
            <person name="Hauser H."/>
            <person name="Holroyd S."/>
            <person name="Jagels K."/>
            <person name="Keith K.E."/>
            <person name="Maddison M."/>
            <person name="Moule S."/>
            <person name="Price C."/>
            <person name="Quail M.A."/>
            <person name="Rabbinowitsch E."/>
            <person name="Rutherford K."/>
            <person name="Sanders M."/>
            <person name="Simmonds M."/>
            <person name="Songsivilai S."/>
            <person name="Stevens K."/>
            <person name="Tumapa S."/>
            <person name="Vesaratchavest M."/>
            <person name="Whitehead S."/>
            <person name="Yeats C."/>
            <person name="Barrell B.G."/>
            <person name="Oyston P.C.F."/>
            <person name="Parkhill J."/>
        </authorList>
    </citation>
    <scope>NUCLEOTIDE SEQUENCE [LARGE SCALE GENOMIC DNA]</scope>
    <source>
        <strain>K96243</strain>
    </source>
</reference>
<evidence type="ECO:0000255" key="1">
    <source>
        <dbReference type="HAMAP-Rule" id="MF_00099"/>
    </source>
</evidence>
<dbReference type="EC" id="3.1.1.61" evidence="1"/>
<dbReference type="EC" id="3.5.1.44" evidence="1"/>
<dbReference type="EMBL" id="BX571966">
    <property type="protein sequence ID" value="CAH39347.1"/>
    <property type="molecule type" value="Genomic_DNA"/>
</dbReference>
<dbReference type="RefSeq" id="WP_004190908.1">
    <property type="nucleotide sequence ID" value="NZ_CP009537.1"/>
</dbReference>
<dbReference type="RefSeq" id="YP_111875.1">
    <property type="nucleotide sequence ID" value="NC_006351.1"/>
</dbReference>
<dbReference type="SMR" id="Q63J47"/>
<dbReference type="STRING" id="272560.BPSS1870"/>
<dbReference type="KEGG" id="bps:BPSS1870"/>
<dbReference type="PATRIC" id="fig|272560.51.peg.5332"/>
<dbReference type="eggNOG" id="COG2201">
    <property type="taxonomic scope" value="Bacteria"/>
</dbReference>
<dbReference type="Proteomes" id="UP000000605">
    <property type="component" value="Chromosome 2"/>
</dbReference>
<dbReference type="GO" id="GO:0005737">
    <property type="term" value="C:cytoplasm"/>
    <property type="evidence" value="ECO:0007669"/>
    <property type="project" value="UniProtKB-SubCell"/>
</dbReference>
<dbReference type="GO" id="GO:0000156">
    <property type="term" value="F:phosphorelay response regulator activity"/>
    <property type="evidence" value="ECO:0007669"/>
    <property type="project" value="InterPro"/>
</dbReference>
<dbReference type="GO" id="GO:0008984">
    <property type="term" value="F:protein-glutamate methylesterase activity"/>
    <property type="evidence" value="ECO:0007669"/>
    <property type="project" value="UniProtKB-UniRule"/>
</dbReference>
<dbReference type="GO" id="GO:0050568">
    <property type="term" value="F:protein-glutamine glutaminase activity"/>
    <property type="evidence" value="ECO:0007669"/>
    <property type="project" value="UniProtKB-UniRule"/>
</dbReference>
<dbReference type="GO" id="GO:0006935">
    <property type="term" value="P:chemotaxis"/>
    <property type="evidence" value="ECO:0007669"/>
    <property type="project" value="UniProtKB-UniRule"/>
</dbReference>
<dbReference type="CDD" id="cd16432">
    <property type="entry name" value="CheB_Rec"/>
    <property type="match status" value="1"/>
</dbReference>
<dbReference type="CDD" id="cd17541">
    <property type="entry name" value="REC_CheB-like"/>
    <property type="match status" value="1"/>
</dbReference>
<dbReference type="Gene3D" id="3.40.50.2300">
    <property type="match status" value="1"/>
</dbReference>
<dbReference type="Gene3D" id="3.40.50.180">
    <property type="entry name" value="Methylesterase CheB, C-terminal domain"/>
    <property type="match status" value="1"/>
</dbReference>
<dbReference type="HAMAP" id="MF_00099">
    <property type="entry name" value="CheB_chemtxs"/>
    <property type="match status" value="1"/>
</dbReference>
<dbReference type="InterPro" id="IPR008248">
    <property type="entry name" value="CheB-like"/>
</dbReference>
<dbReference type="InterPro" id="IPR035909">
    <property type="entry name" value="CheB_C"/>
</dbReference>
<dbReference type="InterPro" id="IPR011006">
    <property type="entry name" value="CheY-like_superfamily"/>
</dbReference>
<dbReference type="InterPro" id="IPR000673">
    <property type="entry name" value="Sig_transdc_resp-reg_Me-estase"/>
</dbReference>
<dbReference type="InterPro" id="IPR001789">
    <property type="entry name" value="Sig_transdc_resp-reg_receiver"/>
</dbReference>
<dbReference type="NCBIfam" id="NF009206">
    <property type="entry name" value="PRK12555.1"/>
    <property type="match status" value="1"/>
</dbReference>
<dbReference type="PANTHER" id="PTHR42872">
    <property type="entry name" value="PROTEIN-GLUTAMATE METHYLESTERASE/PROTEIN-GLUTAMINE GLUTAMINASE"/>
    <property type="match status" value="1"/>
</dbReference>
<dbReference type="PANTHER" id="PTHR42872:SF6">
    <property type="entry name" value="PROTEIN-GLUTAMATE METHYLESTERASE_PROTEIN-GLUTAMINE GLUTAMINASE"/>
    <property type="match status" value="1"/>
</dbReference>
<dbReference type="Pfam" id="PF01339">
    <property type="entry name" value="CheB_methylest"/>
    <property type="match status" value="1"/>
</dbReference>
<dbReference type="Pfam" id="PF00072">
    <property type="entry name" value="Response_reg"/>
    <property type="match status" value="1"/>
</dbReference>
<dbReference type="PIRSF" id="PIRSF000876">
    <property type="entry name" value="RR_chemtxs_CheB"/>
    <property type="match status" value="1"/>
</dbReference>
<dbReference type="SMART" id="SM00448">
    <property type="entry name" value="REC"/>
    <property type="match status" value="1"/>
</dbReference>
<dbReference type="SUPFAM" id="SSF52172">
    <property type="entry name" value="CheY-like"/>
    <property type="match status" value="1"/>
</dbReference>
<dbReference type="SUPFAM" id="SSF52738">
    <property type="entry name" value="Methylesterase CheB, C-terminal domain"/>
    <property type="match status" value="1"/>
</dbReference>
<dbReference type="PROSITE" id="PS50122">
    <property type="entry name" value="CHEB"/>
    <property type="match status" value="1"/>
</dbReference>
<dbReference type="PROSITE" id="PS50110">
    <property type="entry name" value="RESPONSE_REGULATORY"/>
    <property type="match status" value="1"/>
</dbReference>
<sequence>MNIGIVNDLPLAVEALRRTIALRPEHRVLWVATDGAQALDFCVAQPPDLVLMDLVMPRIDGVSATRSIMERSPCAILIVTANVGANASYVYEAMGAGALDAVDTPTLEQGGSADPSQPLLAKIDQIGRLLATRMPLAAPAAAAPAPQGALPPLVAIGASAGGPTALTALLRRLPDDFPAALVIVQHVDQAFAIGMAQWLDGYSPLPVRIARQGSVPQAGEVLLAATNDHLHLTSRGVLAYTRRPEETPYRPSVDVFFHSVVDHWKGEAIGVLLTGMGRDGALGLKAMRTKGHYTIAQDEATSAVYGMPKAAAAIGAASAVLPLERIADQLISLVQRNRQRWR</sequence>
<keyword id="KW-0145">Chemotaxis</keyword>
<keyword id="KW-0963">Cytoplasm</keyword>
<keyword id="KW-0378">Hydrolase</keyword>
<keyword id="KW-0597">Phosphoprotein</keyword>
<keyword id="KW-1185">Reference proteome</keyword>
<accession>Q63J47</accession>
<name>CHEB2_BURPS</name>
<feature type="chain" id="PRO_0000225446" description="Protein-glutamate methylesterase/protein-glutamine glutaminase 2">
    <location>
        <begin position="1"/>
        <end position="342"/>
    </location>
</feature>
<feature type="domain" description="Response regulatory" evidence="1">
    <location>
        <begin position="2"/>
        <end position="119"/>
    </location>
</feature>
<feature type="domain" description="CheB-type methylesterase" evidence="1">
    <location>
        <begin position="144"/>
        <end position="337"/>
    </location>
</feature>
<feature type="active site" evidence="1">
    <location>
        <position position="159"/>
    </location>
</feature>
<feature type="active site" evidence="1">
    <location>
        <position position="186"/>
    </location>
</feature>
<feature type="active site" evidence="1">
    <location>
        <position position="279"/>
    </location>
</feature>
<feature type="modified residue" description="4-aspartylphosphate" evidence="1">
    <location>
        <position position="53"/>
    </location>
</feature>
<proteinExistence type="inferred from homology"/>
<comment type="function">
    <text evidence="1">Involved in chemotaxis. Part of a chemotaxis signal transduction system that modulates chemotaxis in response to various stimuli. Catalyzes the demethylation of specific methylglutamate residues introduced into the chemoreceptors (methyl-accepting chemotaxis proteins or MCP) by CheR. Also mediates the irreversible deamidation of specific glutamine residues to glutamic acid.</text>
</comment>
<comment type="catalytic activity">
    <reaction evidence="1">
        <text>[protein]-L-glutamate 5-O-methyl ester + H2O = L-glutamyl-[protein] + methanol + H(+)</text>
        <dbReference type="Rhea" id="RHEA:23236"/>
        <dbReference type="Rhea" id="RHEA-COMP:10208"/>
        <dbReference type="Rhea" id="RHEA-COMP:10311"/>
        <dbReference type="ChEBI" id="CHEBI:15377"/>
        <dbReference type="ChEBI" id="CHEBI:15378"/>
        <dbReference type="ChEBI" id="CHEBI:17790"/>
        <dbReference type="ChEBI" id="CHEBI:29973"/>
        <dbReference type="ChEBI" id="CHEBI:82795"/>
        <dbReference type="EC" id="3.1.1.61"/>
    </reaction>
</comment>
<comment type="catalytic activity">
    <reaction evidence="1">
        <text>L-glutaminyl-[protein] + H2O = L-glutamyl-[protein] + NH4(+)</text>
        <dbReference type="Rhea" id="RHEA:16441"/>
        <dbReference type="Rhea" id="RHEA-COMP:10207"/>
        <dbReference type="Rhea" id="RHEA-COMP:10208"/>
        <dbReference type="ChEBI" id="CHEBI:15377"/>
        <dbReference type="ChEBI" id="CHEBI:28938"/>
        <dbReference type="ChEBI" id="CHEBI:29973"/>
        <dbReference type="ChEBI" id="CHEBI:30011"/>
        <dbReference type="EC" id="3.5.1.44"/>
    </reaction>
</comment>
<comment type="subcellular location">
    <subcellularLocation>
        <location evidence="1">Cytoplasm</location>
    </subcellularLocation>
</comment>
<comment type="domain">
    <text evidence="1">Contains a C-terminal catalytic domain, and an N-terminal region which modulates catalytic activity.</text>
</comment>
<comment type="PTM">
    <text evidence="1">Phosphorylated by CheA. Phosphorylation of the N-terminal regulatory domain activates the methylesterase activity.</text>
</comment>
<comment type="similarity">
    <text evidence="1">Belongs to the CheB family.</text>
</comment>